<keyword id="KW-0378">Hydrolase</keyword>
<keyword id="KW-0408">Iron</keyword>
<keyword id="KW-0479">Metal-binding</keyword>
<dbReference type="EC" id="3.5.4.39" evidence="1"/>
<dbReference type="EMBL" id="CP000099">
    <property type="protein sequence ID" value="AAZ70151.1"/>
    <property type="molecule type" value="Genomic_DNA"/>
</dbReference>
<dbReference type="SMR" id="Q46D91"/>
<dbReference type="STRING" id="269797.Mbar_A1183"/>
<dbReference type="PaxDb" id="269797-Mbar_A1183"/>
<dbReference type="KEGG" id="mba:Mbar_A1183"/>
<dbReference type="eggNOG" id="arCOG04301">
    <property type="taxonomic scope" value="Archaea"/>
</dbReference>
<dbReference type="HOGENOM" id="CLU_062816_1_0_2"/>
<dbReference type="OrthoDB" id="53087at2157"/>
<dbReference type="UniPathway" id="UPA00065"/>
<dbReference type="GO" id="GO:0003934">
    <property type="term" value="F:GTP cyclohydrolase I activity"/>
    <property type="evidence" value="ECO:0007669"/>
    <property type="project" value="InterPro"/>
</dbReference>
<dbReference type="GO" id="GO:0044682">
    <property type="term" value="F:GTP cyclohydrolase IV activity"/>
    <property type="evidence" value="ECO:0007669"/>
    <property type="project" value="UniProtKB-UniRule"/>
</dbReference>
<dbReference type="GO" id="GO:0005506">
    <property type="term" value="F:iron ion binding"/>
    <property type="evidence" value="ECO:0007669"/>
    <property type="project" value="UniProtKB-UniRule"/>
</dbReference>
<dbReference type="GO" id="GO:2001118">
    <property type="term" value="P:tetrahydromethanopterin biosynthetic process"/>
    <property type="evidence" value="ECO:0007669"/>
    <property type="project" value="UniProtKB-UniRule"/>
</dbReference>
<dbReference type="Gene3D" id="3.10.270.10">
    <property type="entry name" value="Urate Oxidase"/>
    <property type="match status" value="1"/>
</dbReference>
<dbReference type="HAMAP" id="MF_01527_A">
    <property type="entry name" value="GTP_cyclohydrol_A"/>
    <property type="match status" value="1"/>
</dbReference>
<dbReference type="InterPro" id="IPR003801">
    <property type="entry name" value="GTP_cyclohydrolase_FolE2/MptA"/>
</dbReference>
<dbReference type="InterPro" id="IPR022840">
    <property type="entry name" value="GTP_cyclohydrolase_MptA"/>
</dbReference>
<dbReference type="NCBIfam" id="TIGR00294">
    <property type="entry name" value="GTP cyclohydrolase MptA"/>
    <property type="match status" value="1"/>
</dbReference>
<dbReference type="PANTHER" id="PTHR36445">
    <property type="entry name" value="GTP CYCLOHYDROLASE MPTA"/>
    <property type="match status" value="1"/>
</dbReference>
<dbReference type="PANTHER" id="PTHR36445:SF1">
    <property type="entry name" value="GTP CYCLOHYDROLASE MPTA"/>
    <property type="match status" value="1"/>
</dbReference>
<dbReference type="Pfam" id="PF02649">
    <property type="entry name" value="GCHY-1"/>
    <property type="match status" value="1"/>
</dbReference>
<protein>
    <recommendedName>
        <fullName evidence="1">GTP cyclohydrolase MptA</fullName>
        <ecNumber evidence="1">3.5.4.39</ecNumber>
    </recommendedName>
    <alternativeName>
        <fullName evidence="1">GTP cyclohydrolase IV</fullName>
    </alternativeName>
</protein>
<reference key="1">
    <citation type="journal article" date="2006" name="J. Bacteriol.">
        <title>The Methanosarcina barkeri genome: comparative analysis with Methanosarcina acetivorans and Methanosarcina mazei reveals extensive rearrangement within methanosarcinal genomes.</title>
        <authorList>
            <person name="Maeder D.L."/>
            <person name="Anderson I."/>
            <person name="Brettin T.S."/>
            <person name="Bruce D.C."/>
            <person name="Gilna P."/>
            <person name="Han C.S."/>
            <person name="Lapidus A."/>
            <person name="Metcalf W.W."/>
            <person name="Saunders E."/>
            <person name="Tapia R."/>
            <person name="Sowers K.R."/>
        </authorList>
    </citation>
    <scope>NUCLEOTIDE SEQUENCE [LARGE SCALE GENOMIC DNA]</scope>
    <source>
        <strain>Fusaro / DSM 804</strain>
    </source>
</reference>
<feature type="chain" id="PRO_0000289539" description="GTP cyclohydrolase MptA">
    <location>
        <begin position="1"/>
        <end position="319"/>
    </location>
</feature>
<feature type="site" description="May be catalytically important" evidence="1">
    <location>
        <position position="167"/>
    </location>
</feature>
<comment type="function">
    <text evidence="1">Converts GTP to 7,8-dihydro-D-neopterin 2',3'-cyclic phosphate, the first intermediate in the biosynthesis of coenzyme methanopterin.</text>
</comment>
<comment type="catalytic activity">
    <reaction evidence="1">
        <text>GTP + H2O = 7,8-dihydroneopterin 2',3'-cyclic phosphate + formate + diphosphate + H(+)</text>
        <dbReference type="Rhea" id="RHEA:25860"/>
        <dbReference type="ChEBI" id="CHEBI:15377"/>
        <dbReference type="ChEBI" id="CHEBI:15378"/>
        <dbReference type="ChEBI" id="CHEBI:15740"/>
        <dbReference type="ChEBI" id="CHEBI:33019"/>
        <dbReference type="ChEBI" id="CHEBI:37565"/>
        <dbReference type="ChEBI" id="CHEBI:58854"/>
        <dbReference type="EC" id="3.5.4.39"/>
    </reaction>
</comment>
<comment type="cofactor">
    <cofactor evidence="1">
        <name>Fe(2+)</name>
        <dbReference type="ChEBI" id="CHEBI:29033"/>
    </cofactor>
    <text evidence="1">Binds 1 Fe(2+) ion per subunit.</text>
</comment>
<comment type="pathway">
    <text evidence="1">Cofactor biosynthesis; 5,6,7,8-tetrahydromethanopterin biosynthesis.</text>
</comment>
<comment type="subunit">
    <text evidence="1">Homodimer.</text>
</comment>
<comment type="similarity">
    <text evidence="1">Belongs to the GTP cyclohydrolase IV family.</text>
</comment>
<sequence>MEHCTFNLPDVQASKPSIAINLTRVGVTNVKKLVEIKRKDKRPIVLISTFDVFVDLPSDRKGANLSRNFEAVDEVLEKILSMPVYEIEQLCSDIAHNLLGRHEYANQAEVRMTSEYMIRRASPATGIKCQEVVNIFAEASAVRGQGNDDYFDVKKLIGAEVVGMTACPCAQEIMRDKAANELSELGVDKDTIIKFLERVPMATHNQRGRGIISIKVAHDFDVSLESIISIIDHSMSSSVYEVLKRADEKVVVETAHMNPKFVEDCVRTMADNVVKEFPNLPDNAVITIKQTNEESIHRHNAYAERVALMGDLRSEINHC</sequence>
<accession>Q46D91</accession>
<gene>
    <name evidence="1" type="primary">mptA</name>
    <name type="ordered locus">Mbar_A1183</name>
</gene>
<evidence type="ECO:0000255" key="1">
    <source>
        <dbReference type="HAMAP-Rule" id="MF_01527"/>
    </source>
</evidence>
<name>MPTA_METBF</name>
<proteinExistence type="inferred from homology"/>
<organism>
    <name type="scientific">Methanosarcina barkeri (strain Fusaro / DSM 804)</name>
    <dbReference type="NCBI Taxonomy" id="269797"/>
    <lineage>
        <taxon>Archaea</taxon>
        <taxon>Methanobacteriati</taxon>
        <taxon>Methanobacteriota</taxon>
        <taxon>Stenosarchaea group</taxon>
        <taxon>Methanomicrobia</taxon>
        <taxon>Methanosarcinales</taxon>
        <taxon>Methanosarcinaceae</taxon>
        <taxon>Methanosarcina</taxon>
    </lineage>
</organism>